<proteinExistence type="evidence at protein level"/>
<comment type="function">
    <text evidence="1">May function as component of the Arp2/3 complex which is involved in regulation of actin polymerization and together with an activating nucleation-promoting factor (NPF) mediates the formation of branched actin networks.</text>
</comment>
<comment type="subunit">
    <text>May be a component of the Arp2/3 complex in which it may replace ARPC5.</text>
</comment>
<comment type="subcellular location">
    <subcellularLocation>
        <location evidence="1">Cytoplasm</location>
        <location evidence="1">Cytoskeleton</location>
    </subcellularLocation>
</comment>
<comment type="similarity">
    <text evidence="3">Belongs to the ARPC5 family.</text>
</comment>
<reference key="1">
    <citation type="journal article" date="2005" name="Science">
        <title>The transcriptional landscape of the mammalian genome.</title>
        <authorList>
            <person name="Carninci P."/>
            <person name="Kasukawa T."/>
            <person name="Katayama S."/>
            <person name="Gough J."/>
            <person name="Frith M.C."/>
            <person name="Maeda N."/>
            <person name="Oyama R."/>
            <person name="Ravasi T."/>
            <person name="Lenhard B."/>
            <person name="Wells C."/>
            <person name="Kodzius R."/>
            <person name="Shimokawa K."/>
            <person name="Bajic V.B."/>
            <person name="Brenner S.E."/>
            <person name="Batalov S."/>
            <person name="Forrest A.R."/>
            <person name="Zavolan M."/>
            <person name="Davis M.J."/>
            <person name="Wilming L.G."/>
            <person name="Aidinis V."/>
            <person name="Allen J.E."/>
            <person name="Ambesi-Impiombato A."/>
            <person name="Apweiler R."/>
            <person name="Aturaliya R.N."/>
            <person name="Bailey T.L."/>
            <person name="Bansal M."/>
            <person name="Baxter L."/>
            <person name="Beisel K.W."/>
            <person name="Bersano T."/>
            <person name="Bono H."/>
            <person name="Chalk A.M."/>
            <person name="Chiu K.P."/>
            <person name="Choudhary V."/>
            <person name="Christoffels A."/>
            <person name="Clutterbuck D.R."/>
            <person name="Crowe M.L."/>
            <person name="Dalla E."/>
            <person name="Dalrymple B.P."/>
            <person name="de Bono B."/>
            <person name="Della Gatta G."/>
            <person name="di Bernardo D."/>
            <person name="Down T."/>
            <person name="Engstrom P."/>
            <person name="Fagiolini M."/>
            <person name="Faulkner G."/>
            <person name="Fletcher C.F."/>
            <person name="Fukushima T."/>
            <person name="Furuno M."/>
            <person name="Futaki S."/>
            <person name="Gariboldi M."/>
            <person name="Georgii-Hemming P."/>
            <person name="Gingeras T.R."/>
            <person name="Gojobori T."/>
            <person name="Green R.E."/>
            <person name="Gustincich S."/>
            <person name="Harbers M."/>
            <person name="Hayashi Y."/>
            <person name="Hensch T.K."/>
            <person name="Hirokawa N."/>
            <person name="Hill D."/>
            <person name="Huminiecki L."/>
            <person name="Iacono M."/>
            <person name="Ikeo K."/>
            <person name="Iwama A."/>
            <person name="Ishikawa T."/>
            <person name="Jakt M."/>
            <person name="Kanapin A."/>
            <person name="Katoh M."/>
            <person name="Kawasawa Y."/>
            <person name="Kelso J."/>
            <person name="Kitamura H."/>
            <person name="Kitano H."/>
            <person name="Kollias G."/>
            <person name="Krishnan S.P."/>
            <person name="Kruger A."/>
            <person name="Kummerfeld S.K."/>
            <person name="Kurochkin I.V."/>
            <person name="Lareau L.F."/>
            <person name="Lazarevic D."/>
            <person name="Lipovich L."/>
            <person name="Liu J."/>
            <person name="Liuni S."/>
            <person name="McWilliam S."/>
            <person name="Madan Babu M."/>
            <person name="Madera M."/>
            <person name="Marchionni L."/>
            <person name="Matsuda H."/>
            <person name="Matsuzawa S."/>
            <person name="Miki H."/>
            <person name="Mignone F."/>
            <person name="Miyake S."/>
            <person name="Morris K."/>
            <person name="Mottagui-Tabar S."/>
            <person name="Mulder N."/>
            <person name="Nakano N."/>
            <person name="Nakauchi H."/>
            <person name="Ng P."/>
            <person name="Nilsson R."/>
            <person name="Nishiguchi S."/>
            <person name="Nishikawa S."/>
            <person name="Nori F."/>
            <person name="Ohara O."/>
            <person name="Okazaki Y."/>
            <person name="Orlando V."/>
            <person name="Pang K.C."/>
            <person name="Pavan W.J."/>
            <person name="Pavesi G."/>
            <person name="Pesole G."/>
            <person name="Petrovsky N."/>
            <person name="Piazza S."/>
            <person name="Reed J."/>
            <person name="Reid J.F."/>
            <person name="Ring B.Z."/>
            <person name="Ringwald M."/>
            <person name="Rost B."/>
            <person name="Ruan Y."/>
            <person name="Salzberg S.L."/>
            <person name="Sandelin A."/>
            <person name="Schneider C."/>
            <person name="Schoenbach C."/>
            <person name="Sekiguchi K."/>
            <person name="Semple C.A."/>
            <person name="Seno S."/>
            <person name="Sessa L."/>
            <person name="Sheng Y."/>
            <person name="Shibata Y."/>
            <person name="Shimada H."/>
            <person name="Shimada K."/>
            <person name="Silva D."/>
            <person name="Sinclair B."/>
            <person name="Sperling S."/>
            <person name="Stupka E."/>
            <person name="Sugiura K."/>
            <person name="Sultana R."/>
            <person name="Takenaka Y."/>
            <person name="Taki K."/>
            <person name="Tammoja K."/>
            <person name="Tan S.L."/>
            <person name="Tang S."/>
            <person name="Taylor M.S."/>
            <person name="Tegner J."/>
            <person name="Teichmann S.A."/>
            <person name="Ueda H.R."/>
            <person name="van Nimwegen E."/>
            <person name="Verardo R."/>
            <person name="Wei C.L."/>
            <person name="Yagi K."/>
            <person name="Yamanishi H."/>
            <person name="Zabarovsky E."/>
            <person name="Zhu S."/>
            <person name="Zimmer A."/>
            <person name="Hide W."/>
            <person name="Bult C."/>
            <person name="Grimmond S.M."/>
            <person name="Teasdale R.D."/>
            <person name="Liu E.T."/>
            <person name="Brusic V."/>
            <person name="Quackenbush J."/>
            <person name="Wahlestedt C."/>
            <person name="Mattick J.S."/>
            <person name="Hume D.A."/>
            <person name="Kai C."/>
            <person name="Sasaki D."/>
            <person name="Tomaru Y."/>
            <person name="Fukuda S."/>
            <person name="Kanamori-Katayama M."/>
            <person name="Suzuki M."/>
            <person name="Aoki J."/>
            <person name="Arakawa T."/>
            <person name="Iida J."/>
            <person name="Imamura K."/>
            <person name="Itoh M."/>
            <person name="Kato T."/>
            <person name="Kawaji H."/>
            <person name="Kawagashira N."/>
            <person name="Kawashima T."/>
            <person name="Kojima M."/>
            <person name="Kondo S."/>
            <person name="Konno H."/>
            <person name="Nakano K."/>
            <person name="Ninomiya N."/>
            <person name="Nishio T."/>
            <person name="Okada M."/>
            <person name="Plessy C."/>
            <person name="Shibata K."/>
            <person name="Shiraki T."/>
            <person name="Suzuki S."/>
            <person name="Tagami M."/>
            <person name="Waki K."/>
            <person name="Watahiki A."/>
            <person name="Okamura-Oho Y."/>
            <person name="Suzuki H."/>
            <person name="Kawai J."/>
            <person name="Hayashizaki Y."/>
        </authorList>
    </citation>
    <scope>NUCLEOTIDE SEQUENCE [LARGE SCALE MRNA]</scope>
    <source>
        <strain>C57BL/6J</strain>
        <tissue>Small intestine</tissue>
    </source>
</reference>
<reference key="2">
    <citation type="journal article" date="2004" name="Genome Res.">
        <title>The status, quality, and expansion of the NIH full-length cDNA project: the Mammalian Gene Collection (MGC).</title>
        <authorList>
            <consortium name="The MGC Project Team"/>
        </authorList>
    </citation>
    <scope>NUCLEOTIDE SEQUENCE [LARGE SCALE MRNA]</scope>
    <source>
        <strain>FVB/N</strain>
        <tissue>Mammary tumor</tissue>
    </source>
</reference>
<reference key="3">
    <citation type="submission" date="2007-03" db="UniProtKB">
        <authorList>
            <person name="Lubec G."/>
            <person name="Klug S."/>
        </authorList>
    </citation>
    <scope>PROTEIN SEQUENCE OF 90-102</scope>
    <scope>IDENTIFICATION BY MASS SPECTROMETRY</scope>
    <source>
        <tissue>Hippocampus</tissue>
    </source>
</reference>
<reference key="4">
    <citation type="journal article" date="2010" name="Cell">
        <title>A tissue-specific atlas of mouse protein phosphorylation and expression.</title>
        <authorList>
            <person name="Huttlin E.L."/>
            <person name="Jedrychowski M.P."/>
            <person name="Elias J.E."/>
            <person name="Goswami T."/>
            <person name="Rad R."/>
            <person name="Beausoleil S.A."/>
            <person name="Villen J."/>
            <person name="Haas W."/>
            <person name="Sowa M.E."/>
            <person name="Gygi S.P."/>
        </authorList>
    </citation>
    <scope>IDENTIFICATION BY MASS SPECTROMETRY [LARGE SCALE ANALYSIS]</scope>
    <source>
        <tissue>Brain</tissue>
        <tissue>Heart</tissue>
        <tissue>Kidney</tissue>
        <tissue>Liver</tissue>
        <tissue>Lung</tissue>
        <tissue>Pancreas</tissue>
        <tissue>Spleen</tissue>
        <tissue>Testis</tissue>
    </source>
</reference>
<accession>Q9D898</accession>
<protein>
    <recommendedName>
        <fullName>Actin-related protein 2/3 complex subunit 5-like protein</fullName>
    </recommendedName>
    <alternativeName>
        <fullName>Arp2/3 complex 16 kDa subunit 2</fullName>
        <shortName>ARC16-2</shortName>
    </alternativeName>
</protein>
<evidence type="ECO:0000250" key="1"/>
<evidence type="ECO:0000250" key="2">
    <source>
        <dbReference type="UniProtKB" id="Q9BPX5"/>
    </source>
</evidence>
<evidence type="ECO:0000305" key="3"/>
<gene>
    <name type="primary">Arpc5l</name>
</gene>
<sequence length="153" mass="16980">MARNTLSSRFRRVDIDEFDENKFVDEHEEAAAAAGEPGPDPCEVDGLLRQGDMLRAFHAALRNSPINTKNQAVKERAQGVVLKVLTNFKSSEIEQAVQSLDRNGIDLLMKYIYKGFEKPTENSSAVLLQWHEKALAVGGLGSIIRVLTARKTV</sequence>
<organism>
    <name type="scientific">Mus musculus</name>
    <name type="common">Mouse</name>
    <dbReference type="NCBI Taxonomy" id="10090"/>
    <lineage>
        <taxon>Eukaryota</taxon>
        <taxon>Metazoa</taxon>
        <taxon>Chordata</taxon>
        <taxon>Craniata</taxon>
        <taxon>Vertebrata</taxon>
        <taxon>Euteleostomi</taxon>
        <taxon>Mammalia</taxon>
        <taxon>Eutheria</taxon>
        <taxon>Euarchontoglires</taxon>
        <taxon>Glires</taxon>
        <taxon>Rodentia</taxon>
        <taxon>Myomorpha</taxon>
        <taxon>Muroidea</taxon>
        <taxon>Muridae</taxon>
        <taxon>Murinae</taxon>
        <taxon>Mus</taxon>
        <taxon>Mus</taxon>
    </lineage>
</organism>
<keyword id="KW-0009">Actin-binding</keyword>
<keyword id="KW-0963">Cytoplasm</keyword>
<keyword id="KW-0206">Cytoskeleton</keyword>
<keyword id="KW-0903">Direct protein sequencing</keyword>
<keyword id="KW-0597">Phosphoprotein</keyword>
<keyword id="KW-1185">Reference proteome</keyword>
<name>ARP5L_MOUSE</name>
<dbReference type="EMBL" id="AK008255">
    <property type="protein sequence ID" value="BAB25561.1"/>
    <property type="molecule type" value="mRNA"/>
</dbReference>
<dbReference type="EMBL" id="BC024482">
    <property type="protein sequence ID" value="AAH24482.1"/>
    <property type="molecule type" value="mRNA"/>
</dbReference>
<dbReference type="CCDS" id="CCDS38120.1"/>
<dbReference type="RefSeq" id="NP_083085.1">
    <property type="nucleotide sequence ID" value="NM_028809.2"/>
</dbReference>
<dbReference type="SMR" id="Q9D898"/>
<dbReference type="BioGRID" id="216564">
    <property type="interactions" value="10"/>
</dbReference>
<dbReference type="FunCoup" id="Q9D898">
    <property type="interactions" value="1893"/>
</dbReference>
<dbReference type="IntAct" id="Q9D898">
    <property type="interactions" value="4"/>
</dbReference>
<dbReference type="MINT" id="Q9D898"/>
<dbReference type="STRING" id="10090.ENSMUSP00000108483"/>
<dbReference type="iPTMnet" id="Q9D898"/>
<dbReference type="PhosphoSitePlus" id="Q9D898"/>
<dbReference type="SwissPalm" id="Q9D898"/>
<dbReference type="REPRODUCTION-2DPAGE" id="Q9D898"/>
<dbReference type="jPOST" id="Q9D898"/>
<dbReference type="PaxDb" id="10090-ENSMUSP00000108483"/>
<dbReference type="ProteomicsDB" id="281832"/>
<dbReference type="Pumba" id="Q9D898"/>
<dbReference type="TopDownProteomics" id="Q9D898"/>
<dbReference type="Antibodypedia" id="16361">
    <property type="antibodies" value="65 antibodies from 20 providers"/>
</dbReference>
<dbReference type="DNASU" id="74192"/>
<dbReference type="Ensembl" id="ENSMUST00000112862.7">
    <property type="protein sequence ID" value="ENSMUSP00000108483.3"/>
    <property type="gene ID" value="ENSMUSG00000026755.15"/>
</dbReference>
<dbReference type="GeneID" id="74192"/>
<dbReference type="KEGG" id="mmu:74192"/>
<dbReference type="UCSC" id="uc008joa.1">
    <property type="organism name" value="mouse"/>
</dbReference>
<dbReference type="AGR" id="MGI:1921442"/>
<dbReference type="CTD" id="81873"/>
<dbReference type="MGI" id="MGI:1921442">
    <property type="gene designation" value="Arpc5l"/>
</dbReference>
<dbReference type="VEuPathDB" id="HostDB:ENSMUSG00000026755"/>
<dbReference type="eggNOG" id="KOG3380">
    <property type="taxonomic scope" value="Eukaryota"/>
</dbReference>
<dbReference type="GeneTree" id="ENSGT00940000158501"/>
<dbReference type="HOGENOM" id="CLU_101888_1_1_1"/>
<dbReference type="InParanoid" id="Q9D898"/>
<dbReference type="OMA" id="LWHEKAF"/>
<dbReference type="OrthoDB" id="429520at2759"/>
<dbReference type="BioGRID-ORCS" id="74192">
    <property type="hits" value="1 hit in 77 CRISPR screens"/>
</dbReference>
<dbReference type="CD-CODE" id="CE726F99">
    <property type="entry name" value="Postsynaptic density"/>
</dbReference>
<dbReference type="ChiTaRS" id="Arpc5l">
    <property type="organism name" value="mouse"/>
</dbReference>
<dbReference type="PRO" id="PR:Q9D898"/>
<dbReference type="Proteomes" id="UP000000589">
    <property type="component" value="Chromosome 2"/>
</dbReference>
<dbReference type="RNAct" id="Q9D898">
    <property type="molecule type" value="protein"/>
</dbReference>
<dbReference type="Bgee" id="ENSMUSG00000026755">
    <property type="expression patterns" value="Expressed in interventricular septum and 264 other cell types or tissues"/>
</dbReference>
<dbReference type="ExpressionAtlas" id="Q9D898">
    <property type="expression patterns" value="baseline and differential"/>
</dbReference>
<dbReference type="GO" id="GO:0005885">
    <property type="term" value="C:Arp2/3 protein complex"/>
    <property type="evidence" value="ECO:0007669"/>
    <property type="project" value="InterPro"/>
</dbReference>
<dbReference type="GO" id="GO:0005737">
    <property type="term" value="C:cytoplasm"/>
    <property type="evidence" value="ECO:0007669"/>
    <property type="project" value="UniProtKB-KW"/>
</dbReference>
<dbReference type="GO" id="GO:0098978">
    <property type="term" value="C:glutamatergic synapse"/>
    <property type="evidence" value="ECO:0000314"/>
    <property type="project" value="SynGO"/>
</dbReference>
<dbReference type="GO" id="GO:0045202">
    <property type="term" value="C:synapse"/>
    <property type="evidence" value="ECO:0000314"/>
    <property type="project" value="SynGO"/>
</dbReference>
<dbReference type="GO" id="GO:0003779">
    <property type="term" value="F:actin binding"/>
    <property type="evidence" value="ECO:0007669"/>
    <property type="project" value="UniProtKB-KW"/>
</dbReference>
<dbReference type="GO" id="GO:0034314">
    <property type="term" value="P:Arp2/3 complex-mediated actin nucleation"/>
    <property type="evidence" value="ECO:0007669"/>
    <property type="project" value="InterPro"/>
</dbReference>
<dbReference type="GO" id="GO:0030833">
    <property type="term" value="P:regulation of actin filament polymerization"/>
    <property type="evidence" value="ECO:0007669"/>
    <property type="project" value="InterPro"/>
</dbReference>
<dbReference type="FunFam" id="1.25.40.190:FF:000001">
    <property type="entry name" value="Actin-related protein 2/3 complex subunit 5"/>
    <property type="match status" value="1"/>
</dbReference>
<dbReference type="Gene3D" id="1.25.40.190">
    <property type="entry name" value="Actin-related protein 2/3 complex subunit 5"/>
    <property type="match status" value="1"/>
</dbReference>
<dbReference type="InterPro" id="IPR006789">
    <property type="entry name" value="ARPC5"/>
</dbReference>
<dbReference type="InterPro" id="IPR036743">
    <property type="entry name" value="ARPC5_sf"/>
</dbReference>
<dbReference type="PANTHER" id="PTHR12644">
    <property type="entry name" value="ARP2/3 COMPLEX 16 KD SUBUNIT P16-ARC"/>
    <property type="match status" value="1"/>
</dbReference>
<dbReference type="Pfam" id="PF04699">
    <property type="entry name" value="P16-Arc"/>
    <property type="match status" value="1"/>
</dbReference>
<dbReference type="PIRSF" id="PIRSF039096">
    <property type="entry name" value="p16-ARC"/>
    <property type="match status" value="1"/>
</dbReference>
<dbReference type="SUPFAM" id="SSF69103">
    <property type="entry name" value="Arp2/3 complex 16 kDa subunit ARPC5"/>
    <property type="match status" value="1"/>
</dbReference>
<feature type="chain" id="PRO_0000279481" description="Actin-related protein 2/3 complex subunit 5-like protein">
    <location>
        <begin position="1"/>
        <end position="153"/>
    </location>
</feature>
<feature type="modified residue" description="Phosphoserine" evidence="2">
    <location>
        <position position="64"/>
    </location>
</feature>